<feature type="chain" id="PRO_0000348777" description="tRNA-cytidine(32) 2-sulfurtransferase">
    <location>
        <begin position="1"/>
        <end position="313"/>
    </location>
</feature>
<feature type="short sequence motif" description="PP-loop motif" evidence="1">
    <location>
        <begin position="46"/>
        <end position="51"/>
    </location>
</feature>
<feature type="binding site" evidence="1">
    <location>
        <position position="121"/>
    </location>
    <ligand>
        <name>[4Fe-4S] cluster</name>
        <dbReference type="ChEBI" id="CHEBI:49883"/>
    </ligand>
</feature>
<feature type="binding site" evidence="1">
    <location>
        <position position="124"/>
    </location>
    <ligand>
        <name>[4Fe-4S] cluster</name>
        <dbReference type="ChEBI" id="CHEBI:49883"/>
    </ligand>
</feature>
<feature type="binding site" evidence="1">
    <location>
        <position position="212"/>
    </location>
    <ligand>
        <name>[4Fe-4S] cluster</name>
        <dbReference type="ChEBI" id="CHEBI:49883"/>
    </ligand>
</feature>
<proteinExistence type="inferred from homology"/>
<comment type="function">
    <text evidence="1">Catalyzes the ATP-dependent 2-thiolation of cytidine in position 32 of tRNA, to form 2-thiocytidine (s(2)C32). The sulfur atoms are provided by the cysteine/cysteine desulfurase (IscS) system.</text>
</comment>
<comment type="catalytic activity">
    <reaction evidence="1">
        <text>cytidine(32) in tRNA + S-sulfanyl-L-cysteinyl-[cysteine desulfurase] + AH2 + ATP = 2-thiocytidine(32) in tRNA + L-cysteinyl-[cysteine desulfurase] + A + AMP + diphosphate + H(+)</text>
        <dbReference type="Rhea" id="RHEA:57048"/>
        <dbReference type="Rhea" id="RHEA-COMP:10288"/>
        <dbReference type="Rhea" id="RHEA-COMP:12157"/>
        <dbReference type="Rhea" id="RHEA-COMP:12158"/>
        <dbReference type="Rhea" id="RHEA-COMP:14821"/>
        <dbReference type="ChEBI" id="CHEBI:13193"/>
        <dbReference type="ChEBI" id="CHEBI:15378"/>
        <dbReference type="ChEBI" id="CHEBI:17499"/>
        <dbReference type="ChEBI" id="CHEBI:29950"/>
        <dbReference type="ChEBI" id="CHEBI:30616"/>
        <dbReference type="ChEBI" id="CHEBI:33019"/>
        <dbReference type="ChEBI" id="CHEBI:61963"/>
        <dbReference type="ChEBI" id="CHEBI:82748"/>
        <dbReference type="ChEBI" id="CHEBI:141453"/>
        <dbReference type="ChEBI" id="CHEBI:456215"/>
    </reaction>
    <physiologicalReaction direction="left-to-right" evidence="1">
        <dbReference type="Rhea" id="RHEA:57049"/>
    </physiologicalReaction>
</comment>
<comment type="cofactor">
    <cofactor evidence="1">
        <name>Mg(2+)</name>
        <dbReference type="ChEBI" id="CHEBI:18420"/>
    </cofactor>
</comment>
<comment type="cofactor">
    <cofactor evidence="1">
        <name>[4Fe-4S] cluster</name>
        <dbReference type="ChEBI" id="CHEBI:49883"/>
    </cofactor>
    <text evidence="1">Binds 1 [4Fe-4S] cluster per subunit. The cluster is chelated by three Cys residues, the fourth Fe has a free coordination site that may bind a sulfur atom transferred from the persulfide of IscS.</text>
</comment>
<comment type="pathway">
    <text evidence="1">tRNA modification.</text>
</comment>
<comment type="subunit">
    <text evidence="1">Homodimer.</text>
</comment>
<comment type="subcellular location">
    <subcellularLocation>
        <location evidence="1">Cytoplasm</location>
    </subcellularLocation>
</comment>
<comment type="miscellaneous">
    <text evidence="1">The thiolation reaction likely consists of two steps: a first activation step by ATP to form an adenylated intermediate of the target base of tRNA, and a second nucleophilic substitution step of the sulfur (S) atom supplied by the hydrosulfide attached to the Fe-S cluster.</text>
</comment>
<comment type="similarity">
    <text evidence="1">Belongs to the TtcA family.</text>
</comment>
<evidence type="ECO:0000255" key="1">
    <source>
        <dbReference type="HAMAP-Rule" id="MF_01850"/>
    </source>
</evidence>
<gene>
    <name evidence="1" type="primary">ttcA</name>
    <name type="ordered locus">Neut_0756</name>
</gene>
<organism>
    <name type="scientific">Nitrosomonas eutropha (strain DSM 101675 / C91 / Nm57)</name>
    <dbReference type="NCBI Taxonomy" id="335283"/>
    <lineage>
        <taxon>Bacteria</taxon>
        <taxon>Pseudomonadati</taxon>
        <taxon>Pseudomonadota</taxon>
        <taxon>Betaproteobacteria</taxon>
        <taxon>Nitrosomonadales</taxon>
        <taxon>Nitrosomonadaceae</taxon>
        <taxon>Nitrosomonas</taxon>
    </lineage>
</organism>
<sequence>MITDTFSRKSEYSTNKLRKRLRRLVGTAIADFNMIESGDRIMVCLSGGKDSYALLDILRNLQAHAPLDFELIAVNLDQKQPGFPEHVLPGYLSEINMPFRIVEQDTYSVVKRVIPEGKTTCSLCSRLRRGVLYRVATELGATKIALGHHRDDILETFFLNMFYGGKLKAMPPKLVSDDGCHVVIRPLAYCKEKDLAAYAQLVQFPIIPCNLCGSQPNLQRQVIKEMMQQWNKKYPGRLETMFTALQNIQLSHLADTSRYDFVGIKPHGIATEEGDKAFDEELLPDSPVGMNHDDAASELDEACSTEAVQGGTI</sequence>
<name>TTCA_NITEC</name>
<reference key="1">
    <citation type="journal article" date="2007" name="Environ. Microbiol.">
        <title>Whole-genome analysis of the ammonia-oxidizing bacterium, Nitrosomonas eutropha C91: implications for niche adaptation.</title>
        <authorList>
            <person name="Stein L.Y."/>
            <person name="Arp D.J."/>
            <person name="Berube P.M."/>
            <person name="Chain P.S."/>
            <person name="Hauser L."/>
            <person name="Jetten M.S."/>
            <person name="Klotz M.G."/>
            <person name="Larimer F.W."/>
            <person name="Norton J.M."/>
            <person name="Op den Camp H.J.M."/>
            <person name="Shin M."/>
            <person name="Wei X."/>
        </authorList>
    </citation>
    <scope>NUCLEOTIDE SEQUENCE [LARGE SCALE GENOMIC DNA]</scope>
    <source>
        <strain>DSM 101675 / C91 / Nm57</strain>
    </source>
</reference>
<protein>
    <recommendedName>
        <fullName evidence="1">tRNA-cytidine(32) 2-sulfurtransferase</fullName>
        <ecNumber evidence="1">2.8.1.-</ecNumber>
    </recommendedName>
    <alternativeName>
        <fullName evidence="1">Two-thiocytidine biosynthesis protein A</fullName>
    </alternativeName>
    <alternativeName>
        <fullName evidence="1">tRNA 2-thiocytidine biosynthesis protein TtcA</fullName>
    </alternativeName>
</protein>
<accession>Q0AI06</accession>
<dbReference type="EC" id="2.8.1.-" evidence="1"/>
<dbReference type="EMBL" id="CP000450">
    <property type="protein sequence ID" value="ABI59026.1"/>
    <property type="molecule type" value="Genomic_DNA"/>
</dbReference>
<dbReference type="RefSeq" id="WP_011633851.1">
    <property type="nucleotide sequence ID" value="NC_008344.1"/>
</dbReference>
<dbReference type="SMR" id="Q0AI06"/>
<dbReference type="STRING" id="335283.Neut_0756"/>
<dbReference type="KEGG" id="net:Neut_0756"/>
<dbReference type="eggNOG" id="COG0037">
    <property type="taxonomic scope" value="Bacteria"/>
</dbReference>
<dbReference type="HOGENOM" id="CLU_026481_0_0_4"/>
<dbReference type="OrthoDB" id="9801054at2"/>
<dbReference type="Proteomes" id="UP000001966">
    <property type="component" value="Chromosome"/>
</dbReference>
<dbReference type="GO" id="GO:0005737">
    <property type="term" value="C:cytoplasm"/>
    <property type="evidence" value="ECO:0007669"/>
    <property type="project" value="UniProtKB-SubCell"/>
</dbReference>
<dbReference type="GO" id="GO:0051539">
    <property type="term" value="F:4 iron, 4 sulfur cluster binding"/>
    <property type="evidence" value="ECO:0007669"/>
    <property type="project" value="UniProtKB-UniRule"/>
</dbReference>
<dbReference type="GO" id="GO:0005524">
    <property type="term" value="F:ATP binding"/>
    <property type="evidence" value="ECO:0007669"/>
    <property type="project" value="UniProtKB-UniRule"/>
</dbReference>
<dbReference type="GO" id="GO:0000287">
    <property type="term" value="F:magnesium ion binding"/>
    <property type="evidence" value="ECO:0007669"/>
    <property type="project" value="UniProtKB-UniRule"/>
</dbReference>
<dbReference type="GO" id="GO:0016783">
    <property type="term" value="F:sulfurtransferase activity"/>
    <property type="evidence" value="ECO:0007669"/>
    <property type="project" value="UniProtKB-UniRule"/>
</dbReference>
<dbReference type="GO" id="GO:0000049">
    <property type="term" value="F:tRNA binding"/>
    <property type="evidence" value="ECO:0007669"/>
    <property type="project" value="UniProtKB-KW"/>
</dbReference>
<dbReference type="GO" id="GO:0034227">
    <property type="term" value="P:tRNA thio-modification"/>
    <property type="evidence" value="ECO:0007669"/>
    <property type="project" value="UniProtKB-UniRule"/>
</dbReference>
<dbReference type="CDD" id="cd24138">
    <property type="entry name" value="TtcA-like"/>
    <property type="match status" value="1"/>
</dbReference>
<dbReference type="Gene3D" id="3.40.50.620">
    <property type="entry name" value="HUPs"/>
    <property type="match status" value="1"/>
</dbReference>
<dbReference type="HAMAP" id="MF_01850">
    <property type="entry name" value="TtcA"/>
    <property type="match status" value="1"/>
</dbReference>
<dbReference type="InterPro" id="IPR014729">
    <property type="entry name" value="Rossmann-like_a/b/a_fold"/>
</dbReference>
<dbReference type="InterPro" id="IPR011063">
    <property type="entry name" value="TilS/TtcA_N"/>
</dbReference>
<dbReference type="InterPro" id="IPR012089">
    <property type="entry name" value="tRNA_Cyd_32_2_STrfase"/>
</dbReference>
<dbReference type="NCBIfam" id="NF007972">
    <property type="entry name" value="PRK10696.1"/>
    <property type="match status" value="1"/>
</dbReference>
<dbReference type="PANTHER" id="PTHR43686:SF1">
    <property type="entry name" value="AMINOTRAN_5 DOMAIN-CONTAINING PROTEIN"/>
    <property type="match status" value="1"/>
</dbReference>
<dbReference type="PANTHER" id="PTHR43686">
    <property type="entry name" value="SULFURTRANSFERASE-RELATED"/>
    <property type="match status" value="1"/>
</dbReference>
<dbReference type="Pfam" id="PF01171">
    <property type="entry name" value="ATP_bind_3"/>
    <property type="match status" value="1"/>
</dbReference>
<dbReference type="SUPFAM" id="SSF52402">
    <property type="entry name" value="Adenine nucleotide alpha hydrolases-like"/>
    <property type="match status" value="1"/>
</dbReference>
<keyword id="KW-0004">4Fe-4S</keyword>
<keyword id="KW-0067">ATP-binding</keyword>
<keyword id="KW-0963">Cytoplasm</keyword>
<keyword id="KW-0408">Iron</keyword>
<keyword id="KW-0411">Iron-sulfur</keyword>
<keyword id="KW-0460">Magnesium</keyword>
<keyword id="KW-0479">Metal-binding</keyword>
<keyword id="KW-0547">Nucleotide-binding</keyword>
<keyword id="KW-0694">RNA-binding</keyword>
<keyword id="KW-0808">Transferase</keyword>
<keyword id="KW-0819">tRNA processing</keyword>
<keyword id="KW-0820">tRNA-binding</keyword>